<proteinExistence type="predicted"/>
<name>YQGL_BACSU</name>
<gene>
    <name type="primary">yqgL</name>
    <name type="ordered locus">BSU24920</name>
</gene>
<organism>
    <name type="scientific">Bacillus subtilis (strain 168)</name>
    <dbReference type="NCBI Taxonomy" id="224308"/>
    <lineage>
        <taxon>Bacteria</taxon>
        <taxon>Bacillati</taxon>
        <taxon>Bacillota</taxon>
        <taxon>Bacilli</taxon>
        <taxon>Bacillales</taxon>
        <taxon>Bacillaceae</taxon>
        <taxon>Bacillus</taxon>
    </lineage>
</organism>
<protein>
    <recommendedName>
        <fullName>Uncharacterized protein YqgL</fullName>
    </recommendedName>
</protein>
<sequence>MDKHPFPYNIRHKLSFFRDTFDIIIQNAHTLTVSWEISEETMRLAEAVLFEKTQDMIKELRIVIKRKDIEAVRTKRTTYDKGEWTIRQAAGDAVYRAEYRIVNSMNVSLKLAGTDDIYLDENGIRHINSFQIEEAHTRWEAQFSAYTCYGRGEKER</sequence>
<feature type="chain" id="PRO_0000049810" description="Uncharacterized protein YqgL">
    <location>
        <begin position="1"/>
        <end position="156"/>
    </location>
</feature>
<dbReference type="EMBL" id="D84432">
    <property type="protein sequence ID" value="BAA12515.1"/>
    <property type="molecule type" value="Genomic_DNA"/>
</dbReference>
<dbReference type="EMBL" id="AL009126">
    <property type="protein sequence ID" value="CAB14422.1"/>
    <property type="molecule type" value="Genomic_DNA"/>
</dbReference>
<dbReference type="PIR" id="F69956">
    <property type="entry name" value="F69956"/>
</dbReference>
<dbReference type="RefSeq" id="NP_390371.1">
    <property type="nucleotide sequence ID" value="NC_000964.3"/>
</dbReference>
<dbReference type="RefSeq" id="WP_009967744.1">
    <property type="nucleotide sequence ID" value="NZ_OZ025638.1"/>
</dbReference>
<dbReference type="FunCoup" id="P54489">
    <property type="interactions" value="138"/>
</dbReference>
<dbReference type="STRING" id="224308.BSU24920"/>
<dbReference type="PaxDb" id="224308-BSU24920"/>
<dbReference type="EnsemblBacteria" id="CAB14422">
    <property type="protein sequence ID" value="CAB14422"/>
    <property type="gene ID" value="BSU_24920"/>
</dbReference>
<dbReference type="GeneID" id="938201"/>
<dbReference type="KEGG" id="bsu:BSU24920"/>
<dbReference type="PATRIC" id="fig|224308.179.peg.2711"/>
<dbReference type="InParanoid" id="P54489"/>
<dbReference type="OrthoDB" id="2894486at2"/>
<dbReference type="BioCyc" id="BSUB:BSU24920-MONOMER"/>
<dbReference type="Proteomes" id="UP000001570">
    <property type="component" value="Chromosome"/>
</dbReference>
<reference key="1">
    <citation type="journal article" date="1996" name="Microbiology">
        <title>Systematic sequencing of the 283 kb 210 degrees-232 degrees region of the Bacillus subtilis genome containing the skin element and many sporulation genes.</title>
        <authorList>
            <person name="Mizuno M."/>
            <person name="Masuda S."/>
            <person name="Takemaru K."/>
            <person name="Hosono S."/>
            <person name="Sato T."/>
            <person name="Takeuchi M."/>
            <person name="Kobayashi Y."/>
        </authorList>
    </citation>
    <scope>NUCLEOTIDE SEQUENCE [GENOMIC DNA]</scope>
    <source>
        <strain>168 / JH642</strain>
    </source>
</reference>
<reference key="2">
    <citation type="journal article" date="1997" name="Nature">
        <title>The complete genome sequence of the Gram-positive bacterium Bacillus subtilis.</title>
        <authorList>
            <person name="Kunst F."/>
            <person name="Ogasawara N."/>
            <person name="Moszer I."/>
            <person name="Albertini A.M."/>
            <person name="Alloni G."/>
            <person name="Azevedo V."/>
            <person name="Bertero M.G."/>
            <person name="Bessieres P."/>
            <person name="Bolotin A."/>
            <person name="Borchert S."/>
            <person name="Borriss R."/>
            <person name="Boursier L."/>
            <person name="Brans A."/>
            <person name="Braun M."/>
            <person name="Brignell S.C."/>
            <person name="Bron S."/>
            <person name="Brouillet S."/>
            <person name="Bruschi C.V."/>
            <person name="Caldwell B."/>
            <person name="Capuano V."/>
            <person name="Carter N.M."/>
            <person name="Choi S.-K."/>
            <person name="Codani J.-J."/>
            <person name="Connerton I.F."/>
            <person name="Cummings N.J."/>
            <person name="Daniel R.A."/>
            <person name="Denizot F."/>
            <person name="Devine K.M."/>
            <person name="Duesterhoeft A."/>
            <person name="Ehrlich S.D."/>
            <person name="Emmerson P.T."/>
            <person name="Entian K.-D."/>
            <person name="Errington J."/>
            <person name="Fabret C."/>
            <person name="Ferrari E."/>
            <person name="Foulger D."/>
            <person name="Fritz C."/>
            <person name="Fujita M."/>
            <person name="Fujita Y."/>
            <person name="Fuma S."/>
            <person name="Galizzi A."/>
            <person name="Galleron N."/>
            <person name="Ghim S.-Y."/>
            <person name="Glaser P."/>
            <person name="Goffeau A."/>
            <person name="Golightly E.J."/>
            <person name="Grandi G."/>
            <person name="Guiseppi G."/>
            <person name="Guy B.J."/>
            <person name="Haga K."/>
            <person name="Haiech J."/>
            <person name="Harwood C.R."/>
            <person name="Henaut A."/>
            <person name="Hilbert H."/>
            <person name="Holsappel S."/>
            <person name="Hosono S."/>
            <person name="Hullo M.-F."/>
            <person name="Itaya M."/>
            <person name="Jones L.-M."/>
            <person name="Joris B."/>
            <person name="Karamata D."/>
            <person name="Kasahara Y."/>
            <person name="Klaerr-Blanchard M."/>
            <person name="Klein C."/>
            <person name="Kobayashi Y."/>
            <person name="Koetter P."/>
            <person name="Koningstein G."/>
            <person name="Krogh S."/>
            <person name="Kumano M."/>
            <person name="Kurita K."/>
            <person name="Lapidus A."/>
            <person name="Lardinois S."/>
            <person name="Lauber J."/>
            <person name="Lazarevic V."/>
            <person name="Lee S.-M."/>
            <person name="Levine A."/>
            <person name="Liu H."/>
            <person name="Masuda S."/>
            <person name="Mauel C."/>
            <person name="Medigue C."/>
            <person name="Medina N."/>
            <person name="Mellado R.P."/>
            <person name="Mizuno M."/>
            <person name="Moestl D."/>
            <person name="Nakai S."/>
            <person name="Noback M."/>
            <person name="Noone D."/>
            <person name="O'Reilly M."/>
            <person name="Ogawa K."/>
            <person name="Ogiwara A."/>
            <person name="Oudega B."/>
            <person name="Park S.-H."/>
            <person name="Parro V."/>
            <person name="Pohl T.M."/>
            <person name="Portetelle D."/>
            <person name="Porwollik S."/>
            <person name="Prescott A.M."/>
            <person name="Presecan E."/>
            <person name="Pujic P."/>
            <person name="Purnelle B."/>
            <person name="Rapoport G."/>
            <person name="Rey M."/>
            <person name="Reynolds S."/>
            <person name="Rieger M."/>
            <person name="Rivolta C."/>
            <person name="Rocha E."/>
            <person name="Roche B."/>
            <person name="Rose M."/>
            <person name="Sadaie Y."/>
            <person name="Sato T."/>
            <person name="Scanlan E."/>
            <person name="Schleich S."/>
            <person name="Schroeter R."/>
            <person name="Scoffone F."/>
            <person name="Sekiguchi J."/>
            <person name="Sekowska A."/>
            <person name="Seror S.J."/>
            <person name="Serror P."/>
            <person name="Shin B.-S."/>
            <person name="Soldo B."/>
            <person name="Sorokin A."/>
            <person name="Tacconi E."/>
            <person name="Takagi T."/>
            <person name="Takahashi H."/>
            <person name="Takemaru K."/>
            <person name="Takeuchi M."/>
            <person name="Tamakoshi A."/>
            <person name="Tanaka T."/>
            <person name="Terpstra P."/>
            <person name="Tognoni A."/>
            <person name="Tosato V."/>
            <person name="Uchiyama S."/>
            <person name="Vandenbol M."/>
            <person name="Vannier F."/>
            <person name="Vassarotti A."/>
            <person name="Viari A."/>
            <person name="Wambutt R."/>
            <person name="Wedler E."/>
            <person name="Wedler H."/>
            <person name="Weitzenegger T."/>
            <person name="Winters P."/>
            <person name="Wipat A."/>
            <person name="Yamamoto H."/>
            <person name="Yamane K."/>
            <person name="Yasumoto K."/>
            <person name="Yata K."/>
            <person name="Yoshida K."/>
            <person name="Yoshikawa H.-F."/>
            <person name="Zumstein E."/>
            <person name="Yoshikawa H."/>
            <person name="Danchin A."/>
        </authorList>
    </citation>
    <scope>NUCLEOTIDE SEQUENCE [LARGE SCALE GENOMIC DNA]</scope>
    <source>
        <strain>168</strain>
    </source>
</reference>
<keyword id="KW-1185">Reference proteome</keyword>
<accession>P54489</accession>